<dbReference type="EMBL" id="CP000140">
    <property type="protein sequence ID" value="ABR42438.1"/>
    <property type="molecule type" value="Genomic_DNA"/>
</dbReference>
<dbReference type="RefSeq" id="WP_005857684.1">
    <property type="nucleotide sequence ID" value="NZ_LR215978.1"/>
</dbReference>
<dbReference type="SMR" id="A6L9S4"/>
<dbReference type="STRING" id="435591.BDI_0662"/>
<dbReference type="PaxDb" id="435591-BDI_0662"/>
<dbReference type="GeneID" id="93521662"/>
<dbReference type="KEGG" id="pdi:BDI_0662"/>
<dbReference type="eggNOG" id="COG0291">
    <property type="taxonomic scope" value="Bacteria"/>
</dbReference>
<dbReference type="HOGENOM" id="CLU_169643_4_3_10"/>
<dbReference type="BioCyc" id="PDIS435591:G1G5A-679-MONOMER"/>
<dbReference type="Proteomes" id="UP000000566">
    <property type="component" value="Chromosome"/>
</dbReference>
<dbReference type="GO" id="GO:0022625">
    <property type="term" value="C:cytosolic large ribosomal subunit"/>
    <property type="evidence" value="ECO:0007669"/>
    <property type="project" value="TreeGrafter"/>
</dbReference>
<dbReference type="GO" id="GO:0003735">
    <property type="term" value="F:structural constituent of ribosome"/>
    <property type="evidence" value="ECO:0007669"/>
    <property type="project" value="InterPro"/>
</dbReference>
<dbReference type="GO" id="GO:0006412">
    <property type="term" value="P:translation"/>
    <property type="evidence" value="ECO:0007669"/>
    <property type="project" value="UniProtKB-UniRule"/>
</dbReference>
<dbReference type="FunFam" id="4.10.410.60:FF:000001">
    <property type="entry name" value="50S ribosomal protein L35"/>
    <property type="match status" value="1"/>
</dbReference>
<dbReference type="Gene3D" id="4.10.410.60">
    <property type="match status" value="1"/>
</dbReference>
<dbReference type="HAMAP" id="MF_00514">
    <property type="entry name" value="Ribosomal_bL35"/>
    <property type="match status" value="1"/>
</dbReference>
<dbReference type="InterPro" id="IPR001706">
    <property type="entry name" value="Ribosomal_bL35"/>
</dbReference>
<dbReference type="InterPro" id="IPR021137">
    <property type="entry name" value="Ribosomal_bL35-like"/>
</dbReference>
<dbReference type="InterPro" id="IPR018265">
    <property type="entry name" value="Ribosomal_bL35_CS"/>
</dbReference>
<dbReference type="InterPro" id="IPR037229">
    <property type="entry name" value="Ribosomal_bL35_sf"/>
</dbReference>
<dbReference type="NCBIfam" id="TIGR00001">
    <property type="entry name" value="rpmI_bact"/>
    <property type="match status" value="1"/>
</dbReference>
<dbReference type="PANTHER" id="PTHR33343">
    <property type="entry name" value="54S RIBOSOMAL PROTEIN BL35M"/>
    <property type="match status" value="1"/>
</dbReference>
<dbReference type="PANTHER" id="PTHR33343:SF1">
    <property type="entry name" value="LARGE RIBOSOMAL SUBUNIT PROTEIN BL35M"/>
    <property type="match status" value="1"/>
</dbReference>
<dbReference type="Pfam" id="PF01632">
    <property type="entry name" value="Ribosomal_L35p"/>
    <property type="match status" value="1"/>
</dbReference>
<dbReference type="PRINTS" id="PR00064">
    <property type="entry name" value="RIBOSOMALL35"/>
</dbReference>
<dbReference type="SUPFAM" id="SSF143034">
    <property type="entry name" value="L35p-like"/>
    <property type="match status" value="1"/>
</dbReference>
<dbReference type="PROSITE" id="PS00936">
    <property type="entry name" value="RIBOSOMAL_L35"/>
    <property type="match status" value="1"/>
</dbReference>
<feature type="chain" id="PRO_1000050733" description="Large ribosomal subunit protein bL35">
    <location>
        <begin position="1"/>
        <end position="65"/>
    </location>
</feature>
<comment type="similarity">
    <text evidence="1">Belongs to the bacterial ribosomal protein bL35 family.</text>
</comment>
<accession>A6L9S4</accession>
<protein>
    <recommendedName>
        <fullName evidence="1">Large ribosomal subunit protein bL35</fullName>
    </recommendedName>
    <alternativeName>
        <fullName evidence="2">50S ribosomal protein L35</fullName>
    </alternativeName>
</protein>
<reference key="1">
    <citation type="journal article" date="2007" name="PLoS Biol.">
        <title>Evolution of symbiotic bacteria in the distal human intestine.</title>
        <authorList>
            <person name="Xu J."/>
            <person name="Mahowald M.A."/>
            <person name="Ley R.E."/>
            <person name="Lozupone C.A."/>
            <person name="Hamady M."/>
            <person name="Martens E.C."/>
            <person name="Henrissat B."/>
            <person name="Coutinho P.M."/>
            <person name="Minx P."/>
            <person name="Latreille P."/>
            <person name="Cordum H."/>
            <person name="Van Brunt A."/>
            <person name="Kim K."/>
            <person name="Fulton R.S."/>
            <person name="Fulton L.A."/>
            <person name="Clifton S.W."/>
            <person name="Wilson R.K."/>
            <person name="Knight R.D."/>
            <person name="Gordon J.I."/>
        </authorList>
    </citation>
    <scope>NUCLEOTIDE SEQUENCE [LARGE SCALE GENOMIC DNA]</scope>
    <source>
        <strain>ATCC 8503 / DSM 20701 / CIP 104284 / JCM 5825 / NCTC 11152</strain>
    </source>
</reference>
<evidence type="ECO:0000255" key="1">
    <source>
        <dbReference type="HAMAP-Rule" id="MF_00514"/>
    </source>
</evidence>
<evidence type="ECO:0000305" key="2"/>
<sequence length="65" mass="7297">MPKMKTNSGAKKRFALTGSGKIKRKHAFKSHILTKKTKKQKRNLTHTGLVASVDVSNVKQMLCMK</sequence>
<keyword id="KW-1185">Reference proteome</keyword>
<keyword id="KW-0687">Ribonucleoprotein</keyword>
<keyword id="KW-0689">Ribosomal protein</keyword>
<organism>
    <name type="scientific">Parabacteroides distasonis (strain ATCC 8503 / DSM 20701 / CIP 104284 / JCM 5825 / NCTC 11152)</name>
    <dbReference type="NCBI Taxonomy" id="435591"/>
    <lineage>
        <taxon>Bacteria</taxon>
        <taxon>Pseudomonadati</taxon>
        <taxon>Bacteroidota</taxon>
        <taxon>Bacteroidia</taxon>
        <taxon>Bacteroidales</taxon>
        <taxon>Tannerellaceae</taxon>
        <taxon>Parabacteroides</taxon>
    </lineage>
</organism>
<gene>
    <name evidence="1" type="primary">rpmI</name>
    <name type="ordered locus">BDI_0662</name>
</gene>
<name>RL35_PARD8</name>
<proteinExistence type="inferred from homology"/>